<evidence type="ECO:0000250" key="1"/>
<evidence type="ECO:0000250" key="2">
    <source>
        <dbReference type="UniProtKB" id="Q99439"/>
    </source>
</evidence>
<evidence type="ECO:0000255" key="3">
    <source>
        <dbReference type="PROSITE-ProRule" id="PRU00044"/>
    </source>
</evidence>
<evidence type="ECO:0000256" key="4">
    <source>
        <dbReference type="SAM" id="MobiDB-lite"/>
    </source>
</evidence>
<evidence type="ECO:0000305" key="5"/>
<protein>
    <recommendedName>
        <fullName>Calponin-2</fullName>
    </recommendedName>
    <alternativeName>
        <fullName>Calponin H2, smooth muscle</fullName>
    </alternativeName>
    <alternativeName>
        <fullName>Neutral calponin</fullName>
    </alternativeName>
</protein>
<sequence length="309" mass="33697">MSSTQFNKGPSYGLSAEVKNRLLSKYDPQKEAELRTWIEGLTGLSIGPDFQKGLKDGTILCTLMNKLQPGSVPKINRSMQNWHQLENLSNFIKAMVSYGMNPVDLFEANDLFESGNMTQVQVSLLALAGKAKTKGLQSGVDIGVKYSEKQERNFDDATMKAGQCVIGLQMGTNKCASQSGMTAYGTRRHLYDPKNHILPPMDHSTISLQMGTNKCASQVGMTAPGTRRHIYDTKLGTDKCDNSSMSLQMGYTQGANQSGQVFGLGRQIYDPKYCPQGTVADGAPSGTGDCPDPGEVPEYPPYYQEEAGY</sequence>
<gene>
    <name type="primary">CNN2</name>
</gene>
<feature type="initiator methionine" description="Removed" evidence="2">
    <location>
        <position position="1"/>
    </location>
</feature>
<feature type="chain" id="PRO_0000232498" description="Calponin-2">
    <location>
        <begin position="2"/>
        <end position="309"/>
    </location>
</feature>
<feature type="domain" description="Calponin-homology (CH)" evidence="3">
    <location>
        <begin position="28"/>
        <end position="132"/>
    </location>
</feature>
<feature type="repeat" description="Calponin-like 1">
    <location>
        <begin position="166"/>
        <end position="191"/>
    </location>
</feature>
<feature type="repeat" description="Calponin-like 2">
    <location>
        <begin position="206"/>
        <end position="231"/>
    </location>
</feature>
<feature type="repeat" description="Calponin-like 3">
    <location>
        <begin position="245"/>
        <end position="269"/>
    </location>
</feature>
<feature type="region of interest" description="Disordered" evidence="4">
    <location>
        <begin position="283"/>
        <end position="309"/>
    </location>
</feature>
<feature type="modified residue" description="N-acetylserine" evidence="2">
    <location>
        <position position="2"/>
    </location>
</feature>
<feature type="modified residue" description="N6-acetyllysine" evidence="2">
    <location>
        <position position="8"/>
    </location>
</feature>
<feature type="modified residue" description="N6-acetyllysine" evidence="2">
    <location>
        <position position="25"/>
    </location>
</feature>
<feature type="modified residue" description="Phosphoserine" evidence="2">
    <location>
        <position position="138"/>
    </location>
</feature>
<reference key="1">
    <citation type="submission" date="2004-11" db="EMBL/GenBank/DDBJ databases">
        <authorList>
            <consortium name="The German cDNA consortium"/>
        </authorList>
    </citation>
    <scope>NUCLEOTIDE SEQUENCE [LARGE SCALE MRNA]</scope>
    <source>
        <tissue>Heart</tissue>
    </source>
</reference>
<organism>
    <name type="scientific">Pongo abelii</name>
    <name type="common">Sumatran orangutan</name>
    <name type="synonym">Pongo pygmaeus abelii</name>
    <dbReference type="NCBI Taxonomy" id="9601"/>
    <lineage>
        <taxon>Eukaryota</taxon>
        <taxon>Metazoa</taxon>
        <taxon>Chordata</taxon>
        <taxon>Craniata</taxon>
        <taxon>Vertebrata</taxon>
        <taxon>Euteleostomi</taxon>
        <taxon>Mammalia</taxon>
        <taxon>Eutheria</taxon>
        <taxon>Euarchontoglires</taxon>
        <taxon>Primates</taxon>
        <taxon>Haplorrhini</taxon>
        <taxon>Catarrhini</taxon>
        <taxon>Hominidae</taxon>
        <taxon>Pongo</taxon>
    </lineage>
</organism>
<keyword id="KW-0007">Acetylation</keyword>
<keyword id="KW-0009">Actin-binding</keyword>
<keyword id="KW-0112">Calmodulin-binding</keyword>
<keyword id="KW-0597">Phosphoprotein</keyword>
<keyword id="KW-1185">Reference proteome</keyword>
<keyword id="KW-0677">Repeat</keyword>
<proteinExistence type="evidence at transcript level"/>
<accession>Q5RFN6</accession>
<dbReference type="EMBL" id="CR857117">
    <property type="protein sequence ID" value="CAH89421.1"/>
    <property type="molecule type" value="mRNA"/>
</dbReference>
<dbReference type="RefSeq" id="NP_001124601.1">
    <property type="nucleotide sequence ID" value="NM_001131129.1"/>
</dbReference>
<dbReference type="SMR" id="Q5RFN6"/>
<dbReference type="FunCoup" id="Q5RFN6">
    <property type="interactions" value="202"/>
</dbReference>
<dbReference type="STRING" id="9601.ENSPPYP00000010439"/>
<dbReference type="Ensembl" id="ENSPPYT00000010852.3">
    <property type="protein sequence ID" value="ENSPPYP00000010439.2"/>
    <property type="gene ID" value="ENSPPYG00000009302.3"/>
</dbReference>
<dbReference type="GeneID" id="100171437"/>
<dbReference type="KEGG" id="pon:100171437"/>
<dbReference type="CTD" id="1265"/>
<dbReference type="eggNOG" id="KOG2046">
    <property type="taxonomic scope" value="Eukaryota"/>
</dbReference>
<dbReference type="GeneTree" id="ENSGT00940000154355"/>
<dbReference type="HOGENOM" id="CLU_055232_0_2_1"/>
<dbReference type="InParanoid" id="Q5RFN6"/>
<dbReference type="OMA" id="DSKYCPK"/>
<dbReference type="OrthoDB" id="21595at2759"/>
<dbReference type="TreeFam" id="TF313921"/>
<dbReference type="Proteomes" id="UP000001595">
    <property type="component" value="Chromosome 19"/>
</dbReference>
<dbReference type="GO" id="GO:0005925">
    <property type="term" value="C:focal adhesion"/>
    <property type="evidence" value="ECO:0007669"/>
    <property type="project" value="TreeGrafter"/>
</dbReference>
<dbReference type="GO" id="GO:0001725">
    <property type="term" value="C:stress fiber"/>
    <property type="evidence" value="ECO:0007669"/>
    <property type="project" value="Ensembl"/>
</dbReference>
<dbReference type="GO" id="GO:0051015">
    <property type="term" value="F:actin filament binding"/>
    <property type="evidence" value="ECO:0007669"/>
    <property type="project" value="TreeGrafter"/>
</dbReference>
<dbReference type="GO" id="GO:0005516">
    <property type="term" value="F:calmodulin binding"/>
    <property type="evidence" value="ECO:0007669"/>
    <property type="project" value="UniProtKB-KW"/>
</dbReference>
<dbReference type="GO" id="GO:0007015">
    <property type="term" value="P:actin filament organization"/>
    <property type="evidence" value="ECO:0007669"/>
    <property type="project" value="TreeGrafter"/>
</dbReference>
<dbReference type="GO" id="GO:0031032">
    <property type="term" value="P:actomyosin structure organization"/>
    <property type="evidence" value="ECO:0007669"/>
    <property type="project" value="InterPro"/>
</dbReference>
<dbReference type="GO" id="GO:0071260">
    <property type="term" value="P:cellular response to mechanical stimulus"/>
    <property type="evidence" value="ECO:0007669"/>
    <property type="project" value="Ensembl"/>
</dbReference>
<dbReference type="GO" id="GO:0032970">
    <property type="term" value="P:regulation of actin filament-based process"/>
    <property type="evidence" value="ECO:0007669"/>
    <property type="project" value="Ensembl"/>
</dbReference>
<dbReference type="CDD" id="cd21283">
    <property type="entry name" value="CH_CNN2"/>
    <property type="match status" value="1"/>
</dbReference>
<dbReference type="FunFam" id="1.10.418.10:FF:000040">
    <property type="entry name" value="Calponin"/>
    <property type="match status" value="1"/>
</dbReference>
<dbReference type="Gene3D" id="1.10.418.10">
    <property type="entry name" value="Calponin-like domain"/>
    <property type="match status" value="1"/>
</dbReference>
<dbReference type="InterPro" id="IPR050606">
    <property type="entry name" value="Calponin-like"/>
</dbReference>
<dbReference type="InterPro" id="IPR001997">
    <property type="entry name" value="Calponin/LIMCH1"/>
</dbReference>
<dbReference type="InterPro" id="IPR000557">
    <property type="entry name" value="Calponin_repeat"/>
</dbReference>
<dbReference type="InterPro" id="IPR001715">
    <property type="entry name" value="CH_dom"/>
</dbReference>
<dbReference type="InterPro" id="IPR036872">
    <property type="entry name" value="CH_dom_sf"/>
</dbReference>
<dbReference type="InterPro" id="IPR003096">
    <property type="entry name" value="SM22_calponin"/>
</dbReference>
<dbReference type="PANTHER" id="PTHR47385">
    <property type="entry name" value="CALPONIN"/>
    <property type="match status" value="1"/>
</dbReference>
<dbReference type="PANTHER" id="PTHR47385:SF7">
    <property type="entry name" value="CALPONIN-2"/>
    <property type="match status" value="1"/>
</dbReference>
<dbReference type="Pfam" id="PF00402">
    <property type="entry name" value="Calponin"/>
    <property type="match status" value="3"/>
</dbReference>
<dbReference type="Pfam" id="PF00307">
    <property type="entry name" value="CH"/>
    <property type="match status" value="1"/>
</dbReference>
<dbReference type="PRINTS" id="PR00889">
    <property type="entry name" value="CALPONIN"/>
</dbReference>
<dbReference type="PRINTS" id="PR00888">
    <property type="entry name" value="SM22CALPONIN"/>
</dbReference>
<dbReference type="SMART" id="SM00033">
    <property type="entry name" value="CH"/>
    <property type="match status" value="1"/>
</dbReference>
<dbReference type="SUPFAM" id="SSF47576">
    <property type="entry name" value="Calponin-homology domain, CH-domain"/>
    <property type="match status" value="1"/>
</dbReference>
<dbReference type="PROSITE" id="PS01052">
    <property type="entry name" value="CALPONIN_1"/>
    <property type="match status" value="3"/>
</dbReference>
<dbReference type="PROSITE" id="PS51122">
    <property type="entry name" value="CALPONIN_2"/>
    <property type="match status" value="3"/>
</dbReference>
<dbReference type="PROSITE" id="PS50021">
    <property type="entry name" value="CH"/>
    <property type="match status" value="1"/>
</dbReference>
<comment type="function">
    <text evidence="1">Thin filament-associated protein that is implicated in the regulation and modulation of smooth muscle contraction. It is capable of binding to actin, calmodulin and tropomyosin. The interaction of calponin with actin inhibits the actomyosin Mg-ATPase activity (By similarity).</text>
</comment>
<comment type="similarity">
    <text evidence="5">Belongs to the calponin family.</text>
</comment>
<name>CNN2_PONAB</name>